<comment type="function">
    <text evidence="1 2 3">Channel that allows the facilitated permeation of water and uncharged molecules, such as hydrogen peroxide and the neutral form of ammonia (NH3), through cellular membranes such as plasma membrane, inner mitochondrial membrane and endoplasmic reticulum membrane of several tissues. The transport of ammonia neutral form induces a parallel transport of proton, at alkaline pH when the concentration of ammonia is high. However, it is unclear whether the transport of proton takes place via the aquaporin or via an endogenous pathway. Also, may transport ammonia analogs such as formamide and methylamine, a transport favourited at basic pH due to the increase of unprotonated (neutral) form, which is expected to favor diffusion. Does not transport urea or glycerol. The water transport mechanism is mercury- and copper-sensitive and passive in response to osmotic driving forces (By similarity). At the canicular plasma membrane, mediates the osmotic transport of water toward the bile canaliculus and facilitates the cAMP-induced bile canalicular water secretion, a process involved in bile formation (By similarity). In addition, mediates the hydrogen peroxide release from hepatocyte mitochondria that modulates the SREBF2-mediated cholesterol synthesis and facilitates the mitochondrial ammonia uptake which is metabolized into urea, mainly under glucagon stimulation (By similarity). In B cells, transports the CYBB-generated hydrogen peroxide from the external leaflet of the plasma membrane to the cytosol to promote B cell activation and differentiation for signal amplification (By similarity). In the small intestine and colon system, mediates water transport through mitochondria and apical membrane of epithelial cells (By similarity). May play an important role in the adaptive response of proximal tubule cells to acidosis possibly facilitating mitochondrial ammonia transport (By similarity).</text>
</comment>
<comment type="catalytic activity">
    <reaction evidence="1">
        <text>H2O(in) = H2O(out)</text>
        <dbReference type="Rhea" id="RHEA:29667"/>
        <dbReference type="ChEBI" id="CHEBI:15377"/>
    </reaction>
</comment>
<comment type="catalytic activity">
    <reaction evidence="1">
        <text>H2O2(out) = H2O2(in)</text>
        <dbReference type="Rhea" id="RHEA:74375"/>
        <dbReference type="ChEBI" id="CHEBI:16240"/>
    </reaction>
</comment>
<comment type="catalytic activity">
    <reaction evidence="1">
        <text>formamide(out) = formamide(in)</text>
        <dbReference type="Rhea" id="RHEA:74387"/>
        <dbReference type="ChEBI" id="CHEBI:16397"/>
    </reaction>
</comment>
<comment type="catalytic activity">
    <reaction evidence="1">
        <text>methylamine(out) = methylamine(in)</text>
        <dbReference type="Rhea" id="RHEA:74391"/>
        <dbReference type="ChEBI" id="CHEBI:59338"/>
    </reaction>
</comment>
<comment type="activity regulation">
    <text evidence="1">Reversibly gated by a two-step sulfenylation-persulfidation process in cells undergoing diverse stresses.</text>
</comment>
<comment type="subcellular location">
    <subcellularLocation>
        <location evidence="3">Cell membrane</location>
        <topology evidence="4">Multi-pass membrane protein</topology>
    </subcellularLocation>
    <subcellularLocation>
        <location evidence="3">Mitochondrion inner membrane</location>
        <topology evidence="4">Multi-pass membrane protein</topology>
    </subcellularLocation>
    <subcellularLocation>
        <location evidence="3">Apical cell membrane</location>
        <topology evidence="4">Multi-pass membrane protein</topology>
    </subcellularLocation>
    <subcellularLocation>
        <location evidence="3">Basolateral cell membrane</location>
        <topology evidence="4">Multi-pass membrane protein</topology>
    </subcellularLocation>
    <subcellularLocation>
        <location evidence="2">Smooth endoplasmic reticulum membrane</location>
        <topology evidence="4">Multi-pass membrane protein</topology>
    </subcellularLocation>
    <text evidence="2 3">Localized at the hepatocyte canalicular plasma membrane (By similarity). Localized at the apical membrane of the gall-bladder epithelial cells lining both the neck and corpus regions (By similarity). Localized on the apical membranes of pancreatic acinar cells and mucosal epithelium of the colon and jejunum. Trafficking from intracellular vesicles to the hepatocyte canalicular plasma membrane is induced by glucagon or the second messenger 3',5'-cyclic AMP and the translocation is protein kinase A and microtubule-dependent. Localized at the brush border membranes of epithelial cells from jejunum (By similarity). Localized at the luminal membranes of crypts in ascending colon (By similarity).</text>
</comment>
<comment type="domain">
    <text>Aquaporins contain two tandem repeats each containing three membrane-spanning domains and a pore-forming loop with the signature motif Asn-Pro-Ala (NPA).</text>
</comment>
<comment type="PTM">
    <text evidence="1">Sulfenylation at Cys-53(C53-SOH) when hydrogen peroxide flows through the AQP8 channel, making it susceptible to hydrogen sulfide produced by CBS.</text>
</comment>
<comment type="PTM">
    <text evidence="1">Persulfidation at Cys-53 is required to gate AQP8 channel; under stress condition, hydrogen peroxide accumulates in the cell leading to CBS activation that produces hydrogen sulfide inducing persulfidation of oxidized Cys-53 (C53-SOH).</text>
</comment>
<comment type="PTM">
    <text evidence="3">N-glycosylated.</text>
</comment>
<comment type="similarity">
    <text evidence="5">Belongs to the MIP/aquaporin (TC 1.A.8) family.</text>
</comment>
<proteinExistence type="evidence at transcript level"/>
<evidence type="ECO:0000250" key="1">
    <source>
        <dbReference type="UniProtKB" id="O94778"/>
    </source>
</evidence>
<evidence type="ECO:0000250" key="2">
    <source>
        <dbReference type="UniProtKB" id="P56404"/>
    </source>
</evidence>
<evidence type="ECO:0000250" key="3">
    <source>
        <dbReference type="UniProtKB" id="P56405"/>
    </source>
</evidence>
<evidence type="ECO:0000255" key="4"/>
<evidence type="ECO:0000305" key="5"/>
<name>AQP8_NOTAL</name>
<keyword id="KW-1003">Cell membrane</keyword>
<keyword id="KW-0256">Endoplasmic reticulum</keyword>
<keyword id="KW-0325">Glycoprotein</keyword>
<keyword id="KW-0472">Membrane</keyword>
<keyword id="KW-0496">Mitochondrion</keyword>
<keyword id="KW-0999">Mitochondrion inner membrane</keyword>
<keyword id="KW-0558">Oxidation</keyword>
<keyword id="KW-0677">Repeat</keyword>
<keyword id="KW-0812">Transmembrane</keyword>
<keyword id="KW-1133">Transmembrane helix</keyword>
<keyword id="KW-0813">Transport</keyword>
<dbReference type="EMBL" id="AY856057">
    <property type="protein sequence ID" value="AAW47639.1"/>
    <property type="molecule type" value="mRNA"/>
</dbReference>
<dbReference type="SMR" id="Q5I4F8"/>
<dbReference type="GlyCosmos" id="Q5I4F8">
    <property type="glycosylation" value="1 site, No reported glycans"/>
</dbReference>
<dbReference type="GO" id="GO:0016324">
    <property type="term" value="C:apical plasma membrane"/>
    <property type="evidence" value="ECO:0000250"/>
    <property type="project" value="UniProtKB"/>
</dbReference>
<dbReference type="GO" id="GO:0016323">
    <property type="term" value="C:basolateral plasma membrane"/>
    <property type="evidence" value="ECO:0000250"/>
    <property type="project" value="UniProtKB"/>
</dbReference>
<dbReference type="GO" id="GO:0031526">
    <property type="term" value="C:brush border membrane"/>
    <property type="evidence" value="ECO:0000250"/>
    <property type="project" value="UniProtKB"/>
</dbReference>
<dbReference type="GO" id="GO:0046691">
    <property type="term" value="C:intracellular canaliculus"/>
    <property type="evidence" value="ECO:0000250"/>
    <property type="project" value="UniProtKB"/>
</dbReference>
<dbReference type="GO" id="GO:0097708">
    <property type="term" value="C:intracellular vesicle"/>
    <property type="evidence" value="ECO:0000250"/>
    <property type="project" value="UniProtKB"/>
</dbReference>
<dbReference type="GO" id="GO:0005743">
    <property type="term" value="C:mitochondrial inner membrane"/>
    <property type="evidence" value="ECO:0000250"/>
    <property type="project" value="UniProtKB"/>
</dbReference>
<dbReference type="GO" id="GO:0031966">
    <property type="term" value="C:mitochondrial membrane"/>
    <property type="evidence" value="ECO:0000250"/>
    <property type="project" value="UniProtKB"/>
</dbReference>
<dbReference type="GO" id="GO:0005739">
    <property type="term" value="C:mitochondrion"/>
    <property type="evidence" value="ECO:0000250"/>
    <property type="project" value="UniProtKB"/>
</dbReference>
<dbReference type="GO" id="GO:0005886">
    <property type="term" value="C:plasma membrane"/>
    <property type="evidence" value="ECO:0000250"/>
    <property type="project" value="UniProtKB"/>
</dbReference>
<dbReference type="GO" id="GO:0005790">
    <property type="term" value="C:smooth endoplasmic reticulum"/>
    <property type="evidence" value="ECO:0000250"/>
    <property type="project" value="UniProtKB"/>
</dbReference>
<dbReference type="GO" id="GO:0030868">
    <property type="term" value="C:smooth endoplasmic reticulum membrane"/>
    <property type="evidence" value="ECO:0007669"/>
    <property type="project" value="UniProtKB-SubCell"/>
</dbReference>
<dbReference type="GO" id="GO:0008519">
    <property type="term" value="F:ammonium channel activity"/>
    <property type="evidence" value="ECO:0000250"/>
    <property type="project" value="UniProtKB"/>
</dbReference>
<dbReference type="GO" id="GO:0015264">
    <property type="term" value="F:methylammonium channel activity"/>
    <property type="evidence" value="ECO:0000250"/>
    <property type="project" value="UniProtKB"/>
</dbReference>
<dbReference type="GO" id="GO:0015265">
    <property type="term" value="F:urea channel activity"/>
    <property type="evidence" value="ECO:0000250"/>
    <property type="project" value="UniProtKB"/>
</dbReference>
<dbReference type="GO" id="GO:0015250">
    <property type="term" value="F:water channel activity"/>
    <property type="evidence" value="ECO:0000250"/>
    <property type="project" value="UniProtKB"/>
</dbReference>
<dbReference type="GO" id="GO:0140157">
    <property type="term" value="P:ammonium import across plasma membrane"/>
    <property type="evidence" value="ECO:0000250"/>
    <property type="project" value="UniProtKB"/>
</dbReference>
<dbReference type="GO" id="GO:0072488">
    <property type="term" value="P:ammonium transmembrane transport"/>
    <property type="evidence" value="ECO:0000250"/>
    <property type="project" value="UniProtKB"/>
</dbReference>
<dbReference type="GO" id="GO:0030183">
    <property type="term" value="P:B cell differentiation"/>
    <property type="evidence" value="ECO:0000250"/>
    <property type="project" value="UniProtKB"/>
</dbReference>
<dbReference type="GO" id="GO:1990748">
    <property type="term" value="P:cellular detoxification"/>
    <property type="evidence" value="ECO:0000250"/>
    <property type="project" value="UniProtKB"/>
</dbReference>
<dbReference type="GO" id="GO:0080170">
    <property type="term" value="P:hydrogen peroxide transmembrane transport"/>
    <property type="evidence" value="ECO:0000250"/>
    <property type="project" value="UniProtKB"/>
</dbReference>
<dbReference type="GO" id="GO:0072489">
    <property type="term" value="P:methylammonium transmembrane transport"/>
    <property type="evidence" value="ECO:0000250"/>
    <property type="project" value="UniProtKB"/>
</dbReference>
<dbReference type="GO" id="GO:0015843">
    <property type="term" value="P:methylammonium transport"/>
    <property type="evidence" value="ECO:0000250"/>
    <property type="project" value="UniProtKB"/>
</dbReference>
<dbReference type="GO" id="GO:0045540">
    <property type="term" value="P:regulation of cholesterol biosynthetic process"/>
    <property type="evidence" value="ECO:0000250"/>
    <property type="project" value="UniProtKB"/>
</dbReference>
<dbReference type="GO" id="GO:0035377">
    <property type="term" value="P:transepithelial water transport"/>
    <property type="evidence" value="ECO:0000250"/>
    <property type="project" value="UniProtKB"/>
</dbReference>
<dbReference type="GO" id="GO:0015840">
    <property type="term" value="P:urea transport"/>
    <property type="evidence" value="ECO:0000250"/>
    <property type="project" value="UniProtKB"/>
</dbReference>
<dbReference type="GO" id="GO:0006833">
    <property type="term" value="P:water transport"/>
    <property type="evidence" value="ECO:0000250"/>
    <property type="project" value="UniProtKB"/>
</dbReference>
<dbReference type="FunFam" id="1.20.1080.10:FF:000015">
    <property type="entry name" value="Aquaporin 8"/>
    <property type="match status" value="1"/>
</dbReference>
<dbReference type="Gene3D" id="1.20.1080.10">
    <property type="entry name" value="Glycerol uptake facilitator protein"/>
    <property type="match status" value="1"/>
</dbReference>
<dbReference type="InterPro" id="IPR023271">
    <property type="entry name" value="Aquaporin-like"/>
</dbReference>
<dbReference type="InterPro" id="IPR023277">
    <property type="entry name" value="Aquaporin_8"/>
</dbReference>
<dbReference type="InterPro" id="IPR034294">
    <property type="entry name" value="Aquaporin_transptr"/>
</dbReference>
<dbReference type="InterPro" id="IPR000425">
    <property type="entry name" value="MIP"/>
</dbReference>
<dbReference type="InterPro" id="IPR022357">
    <property type="entry name" value="MIP_CS"/>
</dbReference>
<dbReference type="PANTHER" id="PTHR45665">
    <property type="entry name" value="AQUAPORIN-8"/>
    <property type="match status" value="1"/>
</dbReference>
<dbReference type="PANTHER" id="PTHR45665:SF9">
    <property type="entry name" value="AQUAPORIN-8"/>
    <property type="match status" value="1"/>
</dbReference>
<dbReference type="Pfam" id="PF00230">
    <property type="entry name" value="MIP"/>
    <property type="match status" value="1"/>
</dbReference>
<dbReference type="PRINTS" id="PR02020">
    <property type="entry name" value="AQUAPORIN8"/>
</dbReference>
<dbReference type="PRINTS" id="PR00783">
    <property type="entry name" value="MINTRINSICP"/>
</dbReference>
<dbReference type="SUPFAM" id="SSF81338">
    <property type="entry name" value="Aquaporin-like"/>
    <property type="match status" value="1"/>
</dbReference>
<dbReference type="PROSITE" id="PS00221">
    <property type="entry name" value="MIP"/>
    <property type="match status" value="1"/>
</dbReference>
<accession>Q5I4F8</accession>
<feature type="chain" id="PRO_0000257849" description="Aquaporin-8">
    <location>
        <begin position="1"/>
        <end position="261"/>
    </location>
</feature>
<feature type="topological domain" description="Cytoplasmic" evidence="4">
    <location>
        <begin position="1"/>
        <end position="36"/>
    </location>
</feature>
<feature type="transmembrane region" description="Helical" evidence="4">
    <location>
        <begin position="37"/>
        <end position="57"/>
    </location>
</feature>
<feature type="topological domain" description="Extracellular" evidence="4">
    <location>
        <begin position="58"/>
        <end position="84"/>
    </location>
</feature>
<feature type="transmembrane region" description="Helical" evidence="4">
    <location>
        <begin position="85"/>
        <end position="105"/>
    </location>
</feature>
<feature type="topological domain" description="Cytoplasmic" evidence="4">
    <location>
        <begin position="106"/>
        <end position="107"/>
    </location>
</feature>
<feature type="transmembrane region" description="Helical" evidence="4">
    <location>
        <begin position="108"/>
        <end position="128"/>
    </location>
</feature>
<feature type="topological domain" description="Extracellular" evidence="4">
    <location>
        <begin position="129"/>
        <end position="156"/>
    </location>
</feature>
<feature type="transmembrane region" description="Helical" evidence="4">
    <location>
        <begin position="157"/>
        <end position="177"/>
    </location>
</feature>
<feature type="topological domain" description="Cytoplasmic" evidence="4">
    <location>
        <begin position="178"/>
        <end position="183"/>
    </location>
</feature>
<feature type="transmembrane region" description="Helical" evidence="4">
    <location>
        <begin position="184"/>
        <end position="204"/>
    </location>
</feature>
<feature type="topological domain" description="Extracellular" evidence="4">
    <location>
        <begin position="205"/>
        <end position="228"/>
    </location>
</feature>
<feature type="transmembrane region" description="Helical" evidence="4">
    <location>
        <begin position="229"/>
        <end position="249"/>
    </location>
</feature>
<feature type="topological domain" description="Cytoplasmic" evidence="4">
    <location>
        <begin position="250"/>
        <end position="261"/>
    </location>
</feature>
<feature type="short sequence motif" description="NPA 1">
    <location>
        <begin position="92"/>
        <end position="94"/>
    </location>
</feature>
<feature type="short sequence motif" description="NPA 2">
    <location>
        <begin position="210"/>
        <end position="212"/>
    </location>
</feature>
<feature type="modified residue" description="Cysteine persulfide" evidence="1">
    <location>
        <position position="53"/>
    </location>
</feature>
<feature type="modified residue" description="Cysteine sulfenic acid (-SOH)" evidence="1">
    <location>
        <position position="53"/>
    </location>
</feature>
<feature type="glycosylation site" description="N-linked (GlcNAc...) asparagine" evidence="4">
    <location>
        <position position="139"/>
    </location>
</feature>
<reference key="1">
    <citation type="submission" date="2004-12" db="EMBL/GenBank/DDBJ databases">
        <title>Cloning and expression of aquaporin 8 in the Spinifex hopping mouse, Notomys alexis.</title>
        <authorList>
            <person name="Bartolo R.C."/>
            <person name="Donald J.A."/>
        </authorList>
    </citation>
    <scope>NUCLEOTIDE SEQUENCE [MRNA]</scope>
</reference>
<sequence length="261" mass="27780">MSGETPMCSIDLSEVKAKETRMAGRFRVSWYEQYIQPCVVELLGSALFIFIGCLSVIENSPDTGLLQPALAHGLALGLIIATLGNISGGHFNPAVSLAVTVIGGLKTMLLIPYWISQIFGGLIGAALAKVVSPEERFWNASGAAFAIVQEQEQVTEALGVEIILTILLVLAVCMGAVNEKTMGPLAPFSIGFSVIVDILAGGGISGACMNPARAFGPAVVAGYWDFHWIYWLGPLLAGLFVGLLIRLFIGDEKTRLILKSR</sequence>
<organism>
    <name type="scientific">Notomys alexis</name>
    <name type="common">Spinifex hopping mouse</name>
    <dbReference type="NCBI Taxonomy" id="184396"/>
    <lineage>
        <taxon>Eukaryota</taxon>
        <taxon>Metazoa</taxon>
        <taxon>Chordata</taxon>
        <taxon>Craniata</taxon>
        <taxon>Vertebrata</taxon>
        <taxon>Euteleostomi</taxon>
        <taxon>Mammalia</taxon>
        <taxon>Eutheria</taxon>
        <taxon>Euarchontoglires</taxon>
        <taxon>Glires</taxon>
        <taxon>Rodentia</taxon>
        <taxon>Myomorpha</taxon>
        <taxon>Muroidea</taxon>
        <taxon>Muridae</taxon>
        <taxon>Murinae</taxon>
        <taxon>Notomys</taxon>
    </lineage>
</organism>
<protein>
    <recommendedName>
        <fullName evidence="1">Aquaporin-8</fullName>
        <shortName>AQP-8</shortName>
    </recommendedName>
</protein>
<gene>
    <name evidence="1" type="primary">AQP8</name>
</gene>